<comment type="function">
    <text evidence="1">Probably part of a tripartite efflux system.</text>
</comment>
<comment type="subunit">
    <text evidence="1">Probably part of a tripartite efflux system, which is composed of an inner membrane transporter, a periplasmic membrane fusion protein, and an outer membrane component.</text>
</comment>
<comment type="subcellular location">
    <subcellularLocation>
        <location evidence="1">Cell inner membrane</location>
        <topology evidence="2">Multi-pass membrane protein</topology>
    </subcellularLocation>
</comment>
<comment type="similarity">
    <text evidence="4">Belongs to the ABC transporter superfamily. Macrolide exporter (TC 3.A.1.122) family.</text>
</comment>
<dbReference type="EC" id="7.6.2.-" evidence="1"/>
<dbReference type="EMBL" id="CT573326">
    <property type="protein sequence ID" value="CAK15812.1"/>
    <property type="molecule type" value="Genomic_DNA"/>
</dbReference>
<dbReference type="RefSeq" id="WP_011534200.1">
    <property type="nucleotide sequence ID" value="NC_008027.1"/>
</dbReference>
<dbReference type="SMR" id="Q1I966"/>
<dbReference type="STRING" id="384676.PSEEN3042"/>
<dbReference type="GeneID" id="32806156"/>
<dbReference type="KEGG" id="pen:PSEEN3042"/>
<dbReference type="eggNOG" id="COG0577">
    <property type="taxonomic scope" value="Bacteria"/>
</dbReference>
<dbReference type="eggNOG" id="COG1136">
    <property type="taxonomic scope" value="Bacteria"/>
</dbReference>
<dbReference type="HOGENOM" id="CLU_000604_78_1_6"/>
<dbReference type="OrthoDB" id="9770036at2"/>
<dbReference type="Proteomes" id="UP000000658">
    <property type="component" value="Chromosome"/>
</dbReference>
<dbReference type="GO" id="GO:0005886">
    <property type="term" value="C:plasma membrane"/>
    <property type="evidence" value="ECO:0007669"/>
    <property type="project" value="UniProtKB-SubCell"/>
</dbReference>
<dbReference type="GO" id="GO:0005524">
    <property type="term" value="F:ATP binding"/>
    <property type="evidence" value="ECO:0007669"/>
    <property type="project" value="UniProtKB-KW"/>
</dbReference>
<dbReference type="GO" id="GO:0016887">
    <property type="term" value="F:ATP hydrolysis activity"/>
    <property type="evidence" value="ECO:0007669"/>
    <property type="project" value="InterPro"/>
</dbReference>
<dbReference type="GO" id="GO:0022857">
    <property type="term" value="F:transmembrane transporter activity"/>
    <property type="evidence" value="ECO:0007669"/>
    <property type="project" value="TreeGrafter"/>
</dbReference>
<dbReference type="CDD" id="cd03255">
    <property type="entry name" value="ABC_MJ0796_LolCDE_FtsE"/>
    <property type="match status" value="1"/>
</dbReference>
<dbReference type="FunFam" id="3.40.50.300:FF:000032">
    <property type="entry name" value="Export ABC transporter ATP-binding protein"/>
    <property type="match status" value="1"/>
</dbReference>
<dbReference type="Gene3D" id="3.40.50.300">
    <property type="entry name" value="P-loop containing nucleotide triphosphate hydrolases"/>
    <property type="match status" value="1"/>
</dbReference>
<dbReference type="InterPro" id="IPR003593">
    <property type="entry name" value="AAA+_ATPase"/>
</dbReference>
<dbReference type="InterPro" id="IPR003838">
    <property type="entry name" value="ABC3_permease_C"/>
</dbReference>
<dbReference type="InterPro" id="IPR003439">
    <property type="entry name" value="ABC_transporter-like_ATP-bd"/>
</dbReference>
<dbReference type="InterPro" id="IPR017871">
    <property type="entry name" value="ABC_transporter-like_CS"/>
</dbReference>
<dbReference type="InterPro" id="IPR017911">
    <property type="entry name" value="MacB-like_ATP-bd"/>
</dbReference>
<dbReference type="InterPro" id="IPR025857">
    <property type="entry name" value="MacB_PCD"/>
</dbReference>
<dbReference type="InterPro" id="IPR050250">
    <property type="entry name" value="Macrolide_Exporter_MacB"/>
</dbReference>
<dbReference type="InterPro" id="IPR027417">
    <property type="entry name" value="P-loop_NTPase"/>
</dbReference>
<dbReference type="PANTHER" id="PTHR30572:SF7">
    <property type="entry name" value="MACROLIDE EXPORT ATP-BINDING_PERMEASE PROTEIN MACB"/>
    <property type="match status" value="1"/>
</dbReference>
<dbReference type="PANTHER" id="PTHR30572">
    <property type="entry name" value="MEMBRANE COMPONENT OF TRANSPORTER-RELATED"/>
    <property type="match status" value="1"/>
</dbReference>
<dbReference type="Pfam" id="PF00005">
    <property type="entry name" value="ABC_tran"/>
    <property type="match status" value="1"/>
</dbReference>
<dbReference type="Pfam" id="PF02687">
    <property type="entry name" value="FtsX"/>
    <property type="match status" value="1"/>
</dbReference>
<dbReference type="Pfam" id="PF12704">
    <property type="entry name" value="MacB_PCD"/>
    <property type="match status" value="1"/>
</dbReference>
<dbReference type="SMART" id="SM00382">
    <property type="entry name" value="AAA"/>
    <property type="match status" value="1"/>
</dbReference>
<dbReference type="SUPFAM" id="SSF52540">
    <property type="entry name" value="P-loop containing nucleoside triphosphate hydrolases"/>
    <property type="match status" value="1"/>
</dbReference>
<dbReference type="PROSITE" id="PS00211">
    <property type="entry name" value="ABC_TRANSPORTER_1"/>
    <property type="match status" value="1"/>
</dbReference>
<dbReference type="PROSITE" id="PS50893">
    <property type="entry name" value="ABC_TRANSPORTER_2"/>
    <property type="match status" value="1"/>
</dbReference>
<dbReference type="PROSITE" id="PS51267">
    <property type="entry name" value="MACB"/>
    <property type="match status" value="1"/>
</dbReference>
<feature type="chain" id="PRO_0000280172" description="Probable export ATP-binding/permease protein MacB">
    <location>
        <begin position="1"/>
        <end position="667"/>
    </location>
</feature>
<feature type="transmembrane region" description="Helical" evidence="2">
    <location>
        <begin position="292"/>
        <end position="312"/>
    </location>
</feature>
<feature type="transmembrane region" description="Helical" evidence="2">
    <location>
        <begin position="540"/>
        <end position="560"/>
    </location>
</feature>
<feature type="transmembrane region" description="Helical" evidence="2">
    <location>
        <begin position="601"/>
        <end position="621"/>
    </location>
</feature>
<feature type="transmembrane region" description="Helical" evidence="2">
    <location>
        <begin position="630"/>
        <end position="650"/>
    </location>
</feature>
<feature type="domain" description="ABC transporter" evidence="3">
    <location>
        <begin position="22"/>
        <end position="260"/>
    </location>
</feature>
<feature type="binding site" evidence="3">
    <location>
        <begin position="58"/>
        <end position="65"/>
    </location>
    <ligand>
        <name>ATP</name>
        <dbReference type="ChEBI" id="CHEBI:30616"/>
    </ligand>
</feature>
<sequence length="667" mass="72481">MNMTVEWSPQRTRATEQGQPLLRLAGVSRRFMAGDREFLALKDINLQIRAGELVAIIGASGSGKSTLMNILGCLDNASSGSYQVNGQETRDLDDDALAALRRDHFGFIFQRYHLLPHLDALRNVEIPAVYAGVPQAGRHQRARELLTRLGLAGHLANRPSQLSGGQQQRVSICRALMNGGEVILADEPTGALDTASGKEVMNILLELHAAGHTVILVTHDPKVAAHAERIIEVSDGQIVDDRRTVREVAKPVEEVQPAAERAPRRLVASLGLFREAFKMAWIALISHRMRTLLTMLGIIIGITSVVSISAIGEGAKGYVLKDIQAIGSNTIDIYSGKSFGDSRAKAIETLSPADVTALNELYYVDSATPVIGQGSLVRYRNIDADVQLNGVSEQYFQVRNIPLAEGIVFSADDARRQAQVVVIDHNTRKRLFAPGVEALGQVILVGSLPCTVIGVTAENKNLFVAGNSLNVWMPYETAAGRVLGQRHLDSISVRIKDGLPSKRVEEEVNKLMLQRHGTKDFFTNNLDSIMQTVQKTSRSLTLLLSLIAVISLVVGGIGVMNIMLVSVTERTREIGIRMAVGARQSDIRQQFLVEAVMVCLIGGVIGIGLSYGIGYLFALFVKQWEMVFSLGSIVTAFVCSTLIGIVFGFVPARNAARLDPIEALARD</sequence>
<keyword id="KW-0067">ATP-binding</keyword>
<keyword id="KW-0997">Cell inner membrane</keyword>
<keyword id="KW-1003">Cell membrane</keyword>
<keyword id="KW-0472">Membrane</keyword>
<keyword id="KW-0547">Nucleotide-binding</keyword>
<keyword id="KW-1278">Translocase</keyword>
<keyword id="KW-0812">Transmembrane</keyword>
<keyword id="KW-1133">Transmembrane helix</keyword>
<keyword id="KW-0813">Transport</keyword>
<protein>
    <recommendedName>
        <fullName evidence="4">Probable export ATP-binding/permease protein MacB</fullName>
        <ecNumber evidence="1">7.6.2.-</ecNumber>
    </recommendedName>
</protein>
<proteinExistence type="inferred from homology"/>
<reference key="1">
    <citation type="journal article" date="2006" name="Nat. Biotechnol.">
        <title>Complete genome sequence of the entomopathogenic and metabolically versatile soil bacterium Pseudomonas entomophila.</title>
        <authorList>
            <person name="Vodovar N."/>
            <person name="Vallenet D."/>
            <person name="Cruveiller S."/>
            <person name="Rouy Z."/>
            <person name="Barbe V."/>
            <person name="Acosta C."/>
            <person name="Cattolico L."/>
            <person name="Jubin C."/>
            <person name="Lajus A."/>
            <person name="Segurens B."/>
            <person name="Vacherie B."/>
            <person name="Wincker P."/>
            <person name="Weissenbach J."/>
            <person name="Lemaitre B."/>
            <person name="Medigue C."/>
            <person name="Boccard F."/>
        </authorList>
    </citation>
    <scope>NUCLEOTIDE SEQUENCE [LARGE SCALE GENOMIC DNA]</scope>
    <source>
        <strain>L48</strain>
    </source>
</reference>
<name>MACBH_PSEE4</name>
<evidence type="ECO:0000250" key="1">
    <source>
        <dbReference type="UniProtKB" id="P75831"/>
    </source>
</evidence>
<evidence type="ECO:0000255" key="2"/>
<evidence type="ECO:0000255" key="3">
    <source>
        <dbReference type="PROSITE-ProRule" id="PRU00434"/>
    </source>
</evidence>
<evidence type="ECO:0000305" key="4"/>
<evidence type="ECO:0000312" key="5">
    <source>
        <dbReference type="EMBL" id="CAK15812.1"/>
    </source>
</evidence>
<gene>
    <name evidence="5" type="primary">macB</name>
    <name evidence="5" type="ordered locus">PSEEN3042</name>
</gene>
<accession>Q1I966</accession>
<organism>
    <name type="scientific">Pseudomonas entomophila (strain L48)</name>
    <dbReference type="NCBI Taxonomy" id="384676"/>
    <lineage>
        <taxon>Bacteria</taxon>
        <taxon>Pseudomonadati</taxon>
        <taxon>Pseudomonadota</taxon>
        <taxon>Gammaproteobacteria</taxon>
        <taxon>Pseudomonadales</taxon>
        <taxon>Pseudomonadaceae</taxon>
        <taxon>Pseudomonas</taxon>
    </lineage>
</organism>